<keyword id="KW-0963">Cytoplasm</keyword>
<keyword id="KW-0539">Nucleus</keyword>
<keyword id="KW-1185">Reference proteome</keyword>
<proteinExistence type="evidence at protein level"/>
<name>IKA1A_XENLA</name>
<reference key="1">
    <citation type="journal article" date="2007" name="Development">
        <title>Inca: a novel p21-activated kinase-associated protein required for cranial neural crest development.</title>
        <authorList>
            <person name="Luo T."/>
            <person name="Xu Y."/>
            <person name="Hoffman T.L."/>
            <person name="Zhang T."/>
            <person name="Schilling T."/>
            <person name="Sargent T.D."/>
        </authorList>
    </citation>
    <scope>NUCLEOTIDE SEQUENCE [MRNA]</scope>
    <scope>FUNCTION</scope>
    <scope>DISRUPTION PHENOTYPE</scope>
    <scope>DEVELOPMENTAL STAGE</scope>
    <scope>INDUCTION</scope>
    <scope>INTERACTION WITH PAK5</scope>
</reference>
<reference key="2">
    <citation type="submission" date="2008-11" db="EMBL/GenBank/DDBJ databases">
        <authorList>
            <consortium name="NIH - Xenopus Gene Collection (XGC) project"/>
        </authorList>
    </citation>
    <scope>NUCLEOTIDE SEQUENCE [LARGE SCALE MRNA]</scope>
    <source>
        <tissue>Gastrula</tissue>
    </source>
</reference>
<sequence length="316" mass="35224">MRKLHLDSLTLQLRSDLQCIKASSSSLCDQMDCMLRVLQDLKRSSPPPSPDIEKTCAVPQRRVPRRDNRISHRTSDLSEADSACCMDLPSDVSPGSCGQRGLEWDSGYSEVSGSSLRGEEDDIVEEESETRAPAVVLRRLPTPSCQRLSSGGFLNSRQGRIRPKSTSDVCLEQWRGIGLGSDSQDWTGCLLSQSRSRQPLILGDNSFADLVKQWMDLPENGDEEGRRVRDGGRWLHKPHGFLISLSGNVKRRLGNMSRLRHSDQEAVKRMSCPQLGCRPLSPYYHQSLSDIAEASTNLLNCRSRRPIICNEGAGFL</sequence>
<organism evidence="7">
    <name type="scientific">Xenopus laevis</name>
    <name type="common">African clawed frog</name>
    <dbReference type="NCBI Taxonomy" id="8355"/>
    <lineage>
        <taxon>Eukaryota</taxon>
        <taxon>Metazoa</taxon>
        <taxon>Chordata</taxon>
        <taxon>Craniata</taxon>
        <taxon>Vertebrata</taxon>
        <taxon>Euteleostomi</taxon>
        <taxon>Amphibia</taxon>
        <taxon>Batrachia</taxon>
        <taxon>Anura</taxon>
        <taxon>Pipoidea</taxon>
        <taxon>Pipidae</taxon>
        <taxon>Xenopodinae</taxon>
        <taxon>Xenopus</taxon>
        <taxon>Xenopus</taxon>
    </lineage>
</organism>
<accession>A7LKB2</accession>
<protein>
    <recommendedName>
        <fullName evidence="5">PAK4-inhibitor inka1</fullName>
    </recommendedName>
    <alternativeName>
        <fullName evidence="4">Induced in neural crest by AP2-alpha protein A</fullName>
        <shortName evidence="4">IncaA</shortName>
    </alternativeName>
</protein>
<dbReference type="EMBL" id="BC169391">
    <property type="protein sequence ID" value="AAI69391.1"/>
    <property type="molecule type" value="mRNA"/>
</dbReference>
<dbReference type="EMBL" id="BC169393">
    <property type="protein sequence ID" value="AAI69393.1"/>
    <property type="molecule type" value="mRNA"/>
</dbReference>
<dbReference type="EMBL" id="EU030286">
    <property type="protein sequence ID" value="ABS71684.1"/>
    <property type="molecule type" value="mRNA"/>
</dbReference>
<dbReference type="GeneID" id="100126002"/>
<dbReference type="KEGG" id="xla:100126002"/>
<dbReference type="AGR" id="Xenbase:XB-GENE-6254968"/>
<dbReference type="CTD" id="100126002"/>
<dbReference type="Xenbase" id="XB-GENE-6254968">
    <property type="gene designation" value="inka1.S"/>
</dbReference>
<dbReference type="OrthoDB" id="8811265at2759"/>
<dbReference type="Proteomes" id="UP000186698">
    <property type="component" value="Chromosome 4S"/>
</dbReference>
<dbReference type="Bgee" id="100126002">
    <property type="expression patterns" value="Expressed in neurula embryo and 16 other cell types or tissues"/>
</dbReference>
<dbReference type="GO" id="GO:0005737">
    <property type="term" value="C:cytoplasm"/>
    <property type="evidence" value="ECO:0000250"/>
    <property type="project" value="UniProtKB"/>
</dbReference>
<dbReference type="GO" id="GO:0005634">
    <property type="term" value="C:nucleus"/>
    <property type="evidence" value="ECO:0000250"/>
    <property type="project" value="UniProtKB"/>
</dbReference>
<dbReference type="GO" id="GO:0019901">
    <property type="term" value="F:protein kinase binding"/>
    <property type="evidence" value="ECO:0000318"/>
    <property type="project" value="GO_Central"/>
</dbReference>
<dbReference type="GO" id="GO:0030291">
    <property type="term" value="F:protein serine/threonine kinase inhibitor activity"/>
    <property type="evidence" value="ECO:0000250"/>
    <property type="project" value="UniProtKB"/>
</dbReference>
<dbReference type="FunFam" id="3.30.200.20:FF:000995">
    <property type="entry name" value="PAK4-inhibitor inka2"/>
    <property type="match status" value="1"/>
</dbReference>
<dbReference type="Gene3D" id="3.30.200.20">
    <property type="entry name" value="Phosphorylase Kinase, domain 1"/>
    <property type="match status" value="1"/>
</dbReference>
<dbReference type="InterPro" id="IPR029267">
    <property type="entry name" value="FAM212"/>
</dbReference>
<dbReference type="InterPro" id="IPR039201">
    <property type="entry name" value="Inka"/>
</dbReference>
<dbReference type="PANTHER" id="PTHR28615:SF1">
    <property type="entry name" value="PAK4-INHIBITOR INKA1"/>
    <property type="match status" value="1"/>
</dbReference>
<dbReference type="PANTHER" id="PTHR28615">
    <property type="entry name" value="PAK4-INHIBITOR INKA1-RELATED"/>
    <property type="match status" value="1"/>
</dbReference>
<dbReference type="Pfam" id="PF15342">
    <property type="entry name" value="FAM212"/>
    <property type="match status" value="1"/>
</dbReference>
<feature type="chain" id="PRO_0000438817" description="PAK4-inhibitor inka1">
    <location>
        <begin position="1"/>
        <end position="316"/>
    </location>
</feature>
<feature type="region of interest" description="Disordered" evidence="2">
    <location>
        <begin position="108"/>
        <end position="130"/>
    </location>
</feature>
<feature type="region of interest" description="Inka box 1" evidence="1">
    <location>
        <begin position="182"/>
        <end position="219"/>
    </location>
</feature>
<feature type="region of interest" description="Inka box 2" evidence="1">
    <location>
        <begin position="289"/>
        <end position="316"/>
    </location>
</feature>
<feature type="compositionally biased region" description="Acidic residues" evidence="2">
    <location>
        <begin position="119"/>
        <end position="128"/>
    </location>
</feature>
<gene>
    <name evidence="5" type="primary">inka1-a</name>
    <name evidence="1" type="synonym">fam212a-a</name>
    <name type="synonym">inca-a</name>
    <name evidence="4" type="synonym">incaa</name>
</gene>
<comment type="function">
    <text evidence="1 6">Inhibitor of the serine/threonine-protein kinase pak4/pak5 (By similarity). Acts by binding pak4/pak5 in a substrate-like manner, inhibiting the protein kinase activity (By similarity). Required for the proper migration of neural crest cells during embryonic development, probably by inhibiting pak4/pak5 (PubMed:17314132).</text>
</comment>
<comment type="subunit">
    <text evidence="3">Interacts with pak4/pak5.</text>
</comment>
<comment type="subcellular location">
    <subcellularLocation>
        <location evidence="1">Nucleus</location>
    </subcellularLocation>
    <subcellularLocation>
        <location evidence="1">Cytoplasm</location>
    </subcellularLocation>
</comment>
<comment type="developmental stage">
    <text evidence="3">Primarily detected in migrating neural crest cells and their derivatives during embryogenesis.</text>
</comment>
<comment type="induction">
    <text evidence="3">Expression is regulated by the transcription factor AP-2-alpha/tfap2a.</text>
</comment>
<comment type="domain">
    <text evidence="1">Contains 2 Inka boxes (also named iBox or inca box). The Inka boxes bind and inhibit PAK4 by binding a substrate-like manner.</text>
</comment>
<comment type="disruption phenotype">
    <text evidence="3">Dramatic reduction in craniofacial cartilage formation.</text>
</comment>
<comment type="similarity">
    <text evidence="5">Belongs to the INKA family.</text>
</comment>
<evidence type="ECO:0000250" key="1">
    <source>
        <dbReference type="UniProtKB" id="Q96EL1"/>
    </source>
</evidence>
<evidence type="ECO:0000256" key="2">
    <source>
        <dbReference type="SAM" id="MobiDB-lite"/>
    </source>
</evidence>
<evidence type="ECO:0000269" key="3">
    <source>
    </source>
</evidence>
<evidence type="ECO:0000303" key="4">
    <source>
    </source>
</evidence>
<evidence type="ECO:0000305" key="5"/>
<evidence type="ECO:0000305" key="6">
    <source>
    </source>
</evidence>
<evidence type="ECO:0000312" key="7">
    <source>
        <dbReference type="EMBL" id="ABS71684.1"/>
    </source>
</evidence>